<proteinExistence type="evidence at protein level"/>
<comment type="function">
    <text evidence="1">Monothiol glutaredoxin involved in the biogenesis of iron-sulfur clusters (By similarity). Binds one iron-sulfur cluster per dimer. The iron-sulfur cluster is bound between subunits, and is complexed by a bound glutathione and a cysteine residue from each subunit (By similarity).</text>
</comment>
<comment type="subunit">
    <text evidence="1 4">Homodimer (By similarity). Interacts with php4.</text>
</comment>
<comment type="subcellular location">
    <subcellularLocation>
        <location>Cytoplasm</location>
    </subcellularLocation>
    <subcellularLocation>
        <location>Nucleus</location>
    </subcellularLocation>
</comment>
<comment type="similarity">
    <text evidence="5">Belongs to the glutaredoxin family. Monothiol subfamily.</text>
</comment>
<gene>
    <name type="primary">grx4</name>
    <name type="ORF">SPBC26H8.06</name>
</gene>
<feature type="chain" id="PRO_0000102253" description="Monothiol glutaredoxin-4">
    <location>
        <begin position="1"/>
        <end position="244"/>
    </location>
</feature>
<feature type="domain" description="Thioredoxin" evidence="3">
    <location>
        <begin position="2"/>
        <end position="106"/>
    </location>
</feature>
<feature type="domain" description="Glutaredoxin" evidence="2">
    <location>
        <begin position="147"/>
        <end position="244"/>
    </location>
</feature>
<feature type="binding site" evidence="1">
    <location>
        <position position="164"/>
    </location>
    <ligand>
        <name>glutathione</name>
        <dbReference type="ChEBI" id="CHEBI:57925"/>
    </ligand>
</feature>
<feature type="binding site" evidence="1">
    <location>
        <position position="172"/>
    </location>
    <ligand>
        <name>[2Fe-2S] cluster</name>
        <dbReference type="ChEBI" id="CHEBI:190135"/>
        <note>ligand shared between dimeric partners</note>
    </ligand>
</feature>
<feature type="binding site" evidence="1">
    <location>
        <begin position="201"/>
        <end position="205"/>
    </location>
    <ligand>
        <name>glutathione</name>
        <dbReference type="ChEBI" id="CHEBI:57925"/>
    </ligand>
</feature>
<feature type="binding site" evidence="1">
    <location>
        <begin position="226"/>
        <end position="227"/>
    </location>
    <ligand>
        <name>glutathione</name>
        <dbReference type="ChEBI" id="CHEBI:57925"/>
    </ligand>
</feature>
<evidence type="ECO:0000250" key="1"/>
<evidence type="ECO:0000255" key="2">
    <source>
        <dbReference type="PROSITE-ProRule" id="PRU00686"/>
    </source>
</evidence>
<evidence type="ECO:0000255" key="3">
    <source>
        <dbReference type="PROSITE-ProRule" id="PRU00691"/>
    </source>
</evidence>
<evidence type="ECO:0000269" key="4">
    <source>
    </source>
</evidence>
<evidence type="ECO:0000305" key="5"/>
<sequence length="244" mass="27099">MSVEITFVEQFQEILQNGKEQIILLNFYAPWAAPCKQMNQVFDQFAKDTKNAVFLKIEAEKFSDIAESFDVNAVPLFVLIHGAKVLARISGANPQKLKAAIDEYIQPLISQISSTNASVETQVNSVQTTNTTSNTSKAPNGLDSELNERLSTLTNAHNVMLFLKGTPSEPACGFSRKLVGLLREQNVQYGFFNILADDSVRQGLKVFSDWPTFPQLYIKGEFVGGLDIVSEMIENGELQEMLPN</sequence>
<keyword id="KW-0001">2Fe-2S</keyword>
<keyword id="KW-0963">Cytoplasm</keyword>
<keyword id="KW-0408">Iron</keyword>
<keyword id="KW-0411">Iron-sulfur</keyword>
<keyword id="KW-0479">Metal-binding</keyword>
<keyword id="KW-0539">Nucleus</keyword>
<keyword id="KW-0676">Redox-active center</keyword>
<keyword id="KW-1185">Reference proteome</keyword>
<reference key="1">
    <citation type="submission" date="2003-10" db="EMBL/GenBank/DDBJ databases">
        <title>Stress response of monothiol glutaredoxin genes from Schizosaccharomyces pombe.</title>
        <authorList>
            <person name="Kim H.-G."/>
            <person name="Lim C.-J."/>
        </authorList>
    </citation>
    <scope>NUCLEOTIDE SEQUENCE [GENOMIC DNA]</scope>
</reference>
<reference key="2">
    <citation type="journal article" date="2002" name="Nature">
        <title>The genome sequence of Schizosaccharomyces pombe.</title>
        <authorList>
            <person name="Wood V."/>
            <person name="Gwilliam R."/>
            <person name="Rajandream M.A."/>
            <person name="Lyne M.H."/>
            <person name="Lyne R."/>
            <person name="Stewart A."/>
            <person name="Sgouros J.G."/>
            <person name="Peat N."/>
            <person name="Hayles J."/>
            <person name="Baker S.G."/>
            <person name="Basham D."/>
            <person name="Bowman S."/>
            <person name="Brooks K."/>
            <person name="Brown D."/>
            <person name="Brown S."/>
            <person name="Chillingworth T."/>
            <person name="Churcher C.M."/>
            <person name="Collins M."/>
            <person name="Connor R."/>
            <person name="Cronin A."/>
            <person name="Davis P."/>
            <person name="Feltwell T."/>
            <person name="Fraser A."/>
            <person name="Gentles S."/>
            <person name="Goble A."/>
            <person name="Hamlin N."/>
            <person name="Harris D.E."/>
            <person name="Hidalgo J."/>
            <person name="Hodgson G."/>
            <person name="Holroyd S."/>
            <person name="Hornsby T."/>
            <person name="Howarth S."/>
            <person name="Huckle E.J."/>
            <person name="Hunt S."/>
            <person name="Jagels K."/>
            <person name="James K.D."/>
            <person name="Jones L."/>
            <person name="Jones M."/>
            <person name="Leather S."/>
            <person name="McDonald S."/>
            <person name="McLean J."/>
            <person name="Mooney P."/>
            <person name="Moule S."/>
            <person name="Mungall K.L."/>
            <person name="Murphy L.D."/>
            <person name="Niblett D."/>
            <person name="Odell C."/>
            <person name="Oliver K."/>
            <person name="O'Neil S."/>
            <person name="Pearson D."/>
            <person name="Quail M.A."/>
            <person name="Rabbinowitsch E."/>
            <person name="Rutherford K.M."/>
            <person name="Rutter S."/>
            <person name="Saunders D."/>
            <person name="Seeger K."/>
            <person name="Sharp S."/>
            <person name="Skelton J."/>
            <person name="Simmonds M.N."/>
            <person name="Squares R."/>
            <person name="Squares S."/>
            <person name="Stevens K."/>
            <person name="Taylor K."/>
            <person name="Taylor R.G."/>
            <person name="Tivey A."/>
            <person name="Walsh S.V."/>
            <person name="Warren T."/>
            <person name="Whitehead S."/>
            <person name="Woodward J.R."/>
            <person name="Volckaert G."/>
            <person name="Aert R."/>
            <person name="Robben J."/>
            <person name="Grymonprez B."/>
            <person name="Weltjens I."/>
            <person name="Vanstreels E."/>
            <person name="Rieger M."/>
            <person name="Schaefer M."/>
            <person name="Mueller-Auer S."/>
            <person name="Gabel C."/>
            <person name="Fuchs M."/>
            <person name="Duesterhoeft A."/>
            <person name="Fritzc C."/>
            <person name="Holzer E."/>
            <person name="Moestl D."/>
            <person name="Hilbert H."/>
            <person name="Borzym K."/>
            <person name="Langer I."/>
            <person name="Beck A."/>
            <person name="Lehrach H."/>
            <person name="Reinhardt R."/>
            <person name="Pohl T.M."/>
            <person name="Eger P."/>
            <person name="Zimmermann W."/>
            <person name="Wedler H."/>
            <person name="Wambutt R."/>
            <person name="Purnelle B."/>
            <person name="Goffeau A."/>
            <person name="Cadieu E."/>
            <person name="Dreano S."/>
            <person name="Gloux S."/>
            <person name="Lelaure V."/>
            <person name="Mottier S."/>
            <person name="Galibert F."/>
            <person name="Aves S.J."/>
            <person name="Xiang Z."/>
            <person name="Hunt C."/>
            <person name="Moore K."/>
            <person name="Hurst S.M."/>
            <person name="Lucas M."/>
            <person name="Rochet M."/>
            <person name="Gaillardin C."/>
            <person name="Tallada V.A."/>
            <person name="Garzon A."/>
            <person name="Thode G."/>
            <person name="Daga R.R."/>
            <person name="Cruzado L."/>
            <person name="Jimenez J."/>
            <person name="Sanchez M."/>
            <person name="del Rey F."/>
            <person name="Benito J."/>
            <person name="Dominguez A."/>
            <person name="Revuelta J.L."/>
            <person name="Moreno S."/>
            <person name="Armstrong J."/>
            <person name="Forsburg S.L."/>
            <person name="Cerutti L."/>
            <person name="Lowe T."/>
            <person name="McCombie W.R."/>
            <person name="Paulsen I."/>
            <person name="Potashkin J."/>
            <person name="Shpakovski G.V."/>
            <person name="Ussery D."/>
            <person name="Barrell B.G."/>
            <person name="Nurse P."/>
        </authorList>
    </citation>
    <scope>NUCLEOTIDE SEQUENCE [LARGE SCALE GENOMIC DNA]</scope>
    <source>
        <strain>972 / ATCC 24843</strain>
    </source>
</reference>
<reference key="3">
    <citation type="journal article" date="2005" name="Biochem. Biophys. Res. Commun.">
        <title>Localization and function of three monothiol glutaredoxins in Schizosaccharomyces pombe.</title>
        <authorList>
            <person name="Chung W.H."/>
            <person name="Kim K.D."/>
            <person name="Roe J.H."/>
        </authorList>
    </citation>
    <scope>SUBCELLULAR LOCATION</scope>
</reference>
<reference key="4">
    <citation type="journal article" date="2005" name="Can. J. Microbiol.">
        <title>Stress-dependent regulation of a monothiol glutaredoxin gene from Schizosaccharomyces pombe.</title>
        <authorList>
            <person name="Kim H.G."/>
            <person name="Kim B.C."/>
            <person name="Park E.H."/>
            <person name="Lim C.J."/>
        </authorList>
    </citation>
    <scope>INDUCTION</scope>
</reference>
<reference key="5">
    <citation type="journal article" date="2006" name="Nat. Biotechnol.">
        <title>ORFeome cloning and global analysis of protein localization in the fission yeast Schizosaccharomyces pombe.</title>
        <authorList>
            <person name="Matsuyama A."/>
            <person name="Arai R."/>
            <person name="Yashiroda Y."/>
            <person name="Shirai A."/>
            <person name="Kamata A."/>
            <person name="Sekido S."/>
            <person name="Kobayashi Y."/>
            <person name="Hashimoto A."/>
            <person name="Hamamoto M."/>
            <person name="Hiraoka Y."/>
            <person name="Horinouchi S."/>
            <person name="Yoshida M."/>
        </authorList>
    </citation>
    <scope>SUBCELLULAR LOCATION [LARGE SCALE ANALYSIS]</scope>
</reference>
<reference key="6">
    <citation type="journal article" date="2009" name="J. Biol. Chem.">
        <title>Both Php4 function and subcellular localization are regulated by iron via a multistep mechanism involving the glutaredoxin Grx4 and the exportin Crm1.</title>
        <authorList>
            <person name="Mercier A."/>
            <person name="Labbe S."/>
        </authorList>
    </citation>
    <scope>INTERACTION WITH PHP4</scope>
</reference>
<name>GLRX4_SCHPO</name>
<dbReference type="EMBL" id="AY435094">
    <property type="protein sequence ID" value="AAR08197.1"/>
    <property type="molecule type" value="Genomic_DNA"/>
</dbReference>
<dbReference type="EMBL" id="CU329671">
    <property type="protein sequence ID" value="CAA21098.1"/>
    <property type="molecule type" value="Genomic_DNA"/>
</dbReference>
<dbReference type="PIR" id="T40018">
    <property type="entry name" value="T40018"/>
</dbReference>
<dbReference type="RefSeq" id="NP_596647.1">
    <property type="nucleotide sequence ID" value="NM_001022569.2"/>
</dbReference>
<dbReference type="SMR" id="O74790"/>
<dbReference type="BioGRID" id="277104">
    <property type="interactions" value="13"/>
</dbReference>
<dbReference type="FunCoup" id="O74790">
    <property type="interactions" value="501"/>
</dbReference>
<dbReference type="IntAct" id="O74790">
    <property type="interactions" value="1"/>
</dbReference>
<dbReference type="STRING" id="284812.O74790"/>
<dbReference type="iPTMnet" id="O74790"/>
<dbReference type="PaxDb" id="4896-SPBC26H8.06.1"/>
<dbReference type="EnsemblFungi" id="SPBC26H8.06.1">
    <property type="protein sequence ID" value="SPBC26H8.06.1:pep"/>
    <property type="gene ID" value="SPBC26H8.06"/>
</dbReference>
<dbReference type="GeneID" id="2540578"/>
<dbReference type="KEGG" id="spo:2540578"/>
<dbReference type="PomBase" id="SPBC26H8.06">
    <property type="gene designation" value="grx4"/>
</dbReference>
<dbReference type="VEuPathDB" id="FungiDB:SPBC26H8.06"/>
<dbReference type="eggNOG" id="KOG0911">
    <property type="taxonomic scope" value="Eukaryota"/>
</dbReference>
<dbReference type="HOGENOM" id="CLU_026126_12_0_1"/>
<dbReference type="InParanoid" id="O74790"/>
<dbReference type="OMA" id="WAEPCKT"/>
<dbReference type="PhylomeDB" id="O74790"/>
<dbReference type="PRO" id="PR:O74790"/>
<dbReference type="Proteomes" id="UP000002485">
    <property type="component" value="Chromosome II"/>
</dbReference>
<dbReference type="GO" id="GO:0005737">
    <property type="term" value="C:cytoplasm"/>
    <property type="evidence" value="ECO:0000314"/>
    <property type="project" value="PomBase"/>
</dbReference>
<dbReference type="GO" id="GO:0005829">
    <property type="term" value="C:cytosol"/>
    <property type="evidence" value="ECO:0000314"/>
    <property type="project" value="PomBase"/>
</dbReference>
<dbReference type="GO" id="GO:0005634">
    <property type="term" value="C:nucleus"/>
    <property type="evidence" value="ECO:0000314"/>
    <property type="project" value="PomBase"/>
</dbReference>
<dbReference type="GO" id="GO:0051537">
    <property type="term" value="F:2 iron, 2 sulfur cluster binding"/>
    <property type="evidence" value="ECO:0000314"/>
    <property type="project" value="PomBase"/>
</dbReference>
<dbReference type="GO" id="GO:0015038">
    <property type="term" value="F:glutathione disulfide oxidoreductase activity"/>
    <property type="evidence" value="ECO:0000315"/>
    <property type="project" value="PomBase"/>
</dbReference>
<dbReference type="GO" id="GO:0046872">
    <property type="term" value="F:metal ion binding"/>
    <property type="evidence" value="ECO:0007669"/>
    <property type="project" value="UniProtKB-KW"/>
</dbReference>
<dbReference type="GO" id="GO:0140311">
    <property type="term" value="F:protein sequestering activity"/>
    <property type="evidence" value="ECO:0000269"/>
    <property type="project" value="PomBase"/>
</dbReference>
<dbReference type="GO" id="GO:0006879">
    <property type="term" value="P:intracellular iron ion homeostasis"/>
    <property type="evidence" value="ECO:0000315"/>
    <property type="project" value="PomBase"/>
</dbReference>
<dbReference type="GO" id="GO:0045944">
    <property type="term" value="P:positive regulation of transcription by RNA polymerase II"/>
    <property type="evidence" value="ECO:0000269"/>
    <property type="project" value="PomBase"/>
</dbReference>
<dbReference type="CDD" id="cd03028">
    <property type="entry name" value="GRX_PICOT_like"/>
    <property type="match status" value="1"/>
</dbReference>
<dbReference type="CDD" id="cd02984">
    <property type="entry name" value="TRX_PICOT"/>
    <property type="match status" value="1"/>
</dbReference>
<dbReference type="FunFam" id="3.40.30.10:FF:000012">
    <property type="entry name" value="Monothiol glutaredoxin"/>
    <property type="match status" value="1"/>
</dbReference>
<dbReference type="FunFam" id="3.40.30.10:FF:000092">
    <property type="entry name" value="Monothiol glutaredoxin"/>
    <property type="match status" value="1"/>
</dbReference>
<dbReference type="Gene3D" id="3.40.30.10">
    <property type="entry name" value="Glutaredoxin"/>
    <property type="match status" value="2"/>
</dbReference>
<dbReference type="InterPro" id="IPR002109">
    <property type="entry name" value="Glutaredoxin"/>
</dbReference>
<dbReference type="InterPro" id="IPR033658">
    <property type="entry name" value="GRX_PICOT-like"/>
</dbReference>
<dbReference type="InterPro" id="IPR004480">
    <property type="entry name" value="Monothiol_GRX-rel"/>
</dbReference>
<dbReference type="InterPro" id="IPR036249">
    <property type="entry name" value="Thioredoxin-like_sf"/>
</dbReference>
<dbReference type="InterPro" id="IPR013766">
    <property type="entry name" value="Thioredoxin_domain"/>
</dbReference>
<dbReference type="NCBIfam" id="TIGR00365">
    <property type="entry name" value="Grx4 family monothiol glutaredoxin"/>
    <property type="match status" value="1"/>
</dbReference>
<dbReference type="PANTHER" id="PTHR10293">
    <property type="entry name" value="GLUTAREDOXIN FAMILY MEMBER"/>
    <property type="match status" value="1"/>
</dbReference>
<dbReference type="PANTHER" id="PTHR10293:SF73">
    <property type="entry name" value="GLUTAREDOXIN-3"/>
    <property type="match status" value="1"/>
</dbReference>
<dbReference type="Pfam" id="PF00462">
    <property type="entry name" value="Glutaredoxin"/>
    <property type="match status" value="1"/>
</dbReference>
<dbReference type="Pfam" id="PF00085">
    <property type="entry name" value="Thioredoxin"/>
    <property type="match status" value="1"/>
</dbReference>
<dbReference type="SUPFAM" id="SSF52833">
    <property type="entry name" value="Thioredoxin-like"/>
    <property type="match status" value="2"/>
</dbReference>
<dbReference type="PROSITE" id="PS51354">
    <property type="entry name" value="GLUTAREDOXIN_2"/>
    <property type="match status" value="1"/>
</dbReference>
<dbReference type="PROSITE" id="PS51352">
    <property type="entry name" value="THIOREDOXIN_2"/>
    <property type="match status" value="1"/>
</dbReference>
<organism>
    <name type="scientific">Schizosaccharomyces pombe (strain 972 / ATCC 24843)</name>
    <name type="common">Fission yeast</name>
    <dbReference type="NCBI Taxonomy" id="284812"/>
    <lineage>
        <taxon>Eukaryota</taxon>
        <taxon>Fungi</taxon>
        <taxon>Dikarya</taxon>
        <taxon>Ascomycota</taxon>
        <taxon>Taphrinomycotina</taxon>
        <taxon>Schizosaccharomycetes</taxon>
        <taxon>Schizosaccharomycetales</taxon>
        <taxon>Schizosaccharomycetaceae</taxon>
        <taxon>Schizosaccharomyces</taxon>
    </lineage>
</organism>
<protein>
    <recommendedName>
        <fullName>Monothiol glutaredoxin-4</fullName>
    </recommendedName>
</protein>
<accession>O74790</accession>